<evidence type="ECO:0000255" key="1">
    <source>
        <dbReference type="HAMAP-Rule" id="MF_01576"/>
    </source>
</evidence>
<sequence length="287" mass="30563">MLLKGAPVAERVLNKIKQEISNSSTRPGLAVVLIGNDPASEVYVGMKVKKATDLGMVSKAHRLSSDATLTDILKLIDRLNNDPMIHGILVQIPLPKHLDANAVIQAISPEKDVDGLHPINMGKLLLGQLGGFAPCTPAGIIELLHYYEIPLHGRHVAVVGRSNIVGKPLAAMLMQKHPSTNATVTLLHSQSENLTEILKTADIIIAAVGVPLFIKETMISSHAIVVDVGTSRVAANNDKGYTLVGDVDFNNVVAKCKAVSPVPGGVGPMTVAMLMKNTWESYKKSSS</sequence>
<dbReference type="EC" id="1.5.1.5" evidence="1"/>
<dbReference type="EC" id="3.5.4.9" evidence="1"/>
<dbReference type="EMBL" id="AE015925">
    <property type="protein sequence ID" value="AAP05194.1"/>
    <property type="molecule type" value="Genomic_DNA"/>
</dbReference>
<dbReference type="RefSeq" id="WP_011006410.1">
    <property type="nucleotide sequence ID" value="NC_003361.3"/>
</dbReference>
<dbReference type="SMR" id="Q823G2"/>
<dbReference type="STRING" id="227941.CCA_00448"/>
<dbReference type="KEGG" id="cca:CCA_00448"/>
<dbReference type="eggNOG" id="COG0190">
    <property type="taxonomic scope" value="Bacteria"/>
</dbReference>
<dbReference type="HOGENOM" id="CLU_034045_2_0_0"/>
<dbReference type="OrthoDB" id="9803580at2"/>
<dbReference type="UniPathway" id="UPA00193"/>
<dbReference type="Proteomes" id="UP000002193">
    <property type="component" value="Chromosome"/>
</dbReference>
<dbReference type="GO" id="GO:0005829">
    <property type="term" value="C:cytosol"/>
    <property type="evidence" value="ECO:0007669"/>
    <property type="project" value="TreeGrafter"/>
</dbReference>
<dbReference type="GO" id="GO:0004477">
    <property type="term" value="F:methenyltetrahydrofolate cyclohydrolase activity"/>
    <property type="evidence" value="ECO:0007669"/>
    <property type="project" value="UniProtKB-UniRule"/>
</dbReference>
<dbReference type="GO" id="GO:0004488">
    <property type="term" value="F:methylenetetrahydrofolate dehydrogenase (NADP+) activity"/>
    <property type="evidence" value="ECO:0007669"/>
    <property type="project" value="UniProtKB-UniRule"/>
</dbReference>
<dbReference type="GO" id="GO:0000105">
    <property type="term" value="P:L-histidine biosynthetic process"/>
    <property type="evidence" value="ECO:0007669"/>
    <property type="project" value="UniProtKB-KW"/>
</dbReference>
<dbReference type="GO" id="GO:0009086">
    <property type="term" value="P:methionine biosynthetic process"/>
    <property type="evidence" value="ECO:0007669"/>
    <property type="project" value="UniProtKB-KW"/>
</dbReference>
<dbReference type="GO" id="GO:0006164">
    <property type="term" value="P:purine nucleotide biosynthetic process"/>
    <property type="evidence" value="ECO:0007669"/>
    <property type="project" value="UniProtKB-KW"/>
</dbReference>
<dbReference type="GO" id="GO:0035999">
    <property type="term" value="P:tetrahydrofolate interconversion"/>
    <property type="evidence" value="ECO:0007669"/>
    <property type="project" value="UniProtKB-UniRule"/>
</dbReference>
<dbReference type="CDD" id="cd01080">
    <property type="entry name" value="NAD_bind_m-THF_DH_Cyclohyd"/>
    <property type="match status" value="1"/>
</dbReference>
<dbReference type="FunFam" id="3.40.50.720:FF:000189">
    <property type="entry name" value="Bifunctional protein FolD"/>
    <property type="match status" value="1"/>
</dbReference>
<dbReference type="FunFam" id="3.40.50.10860:FF:000005">
    <property type="entry name" value="C-1-tetrahydrofolate synthase, cytoplasmic, putative"/>
    <property type="match status" value="1"/>
</dbReference>
<dbReference type="Gene3D" id="3.40.50.10860">
    <property type="entry name" value="Leucine Dehydrogenase, chain A, domain 1"/>
    <property type="match status" value="1"/>
</dbReference>
<dbReference type="Gene3D" id="3.40.50.720">
    <property type="entry name" value="NAD(P)-binding Rossmann-like Domain"/>
    <property type="match status" value="1"/>
</dbReference>
<dbReference type="HAMAP" id="MF_01576">
    <property type="entry name" value="THF_DHG_CYH"/>
    <property type="match status" value="1"/>
</dbReference>
<dbReference type="InterPro" id="IPR046346">
    <property type="entry name" value="Aminoacid_DH-like_N_sf"/>
</dbReference>
<dbReference type="InterPro" id="IPR036291">
    <property type="entry name" value="NAD(P)-bd_dom_sf"/>
</dbReference>
<dbReference type="InterPro" id="IPR000672">
    <property type="entry name" value="THF_DH/CycHdrlase"/>
</dbReference>
<dbReference type="InterPro" id="IPR020630">
    <property type="entry name" value="THF_DH/CycHdrlase_cat_dom"/>
</dbReference>
<dbReference type="InterPro" id="IPR020867">
    <property type="entry name" value="THF_DH/CycHdrlase_CS"/>
</dbReference>
<dbReference type="InterPro" id="IPR020631">
    <property type="entry name" value="THF_DH/CycHdrlase_NAD-bd_dom"/>
</dbReference>
<dbReference type="NCBIfam" id="NF010778">
    <property type="entry name" value="PRK14181.1"/>
    <property type="match status" value="1"/>
</dbReference>
<dbReference type="PANTHER" id="PTHR48099:SF5">
    <property type="entry name" value="C-1-TETRAHYDROFOLATE SYNTHASE, CYTOPLASMIC"/>
    <property type="match status" value="1"/>
</dbReference>
<dbReference type="PANTHER" id="PTHR48099">
    <property type="entry name" value="C-1-TETRAHYDROFOLATE SYNTHASE, CYTOPLASMIC-RELATED"/>
    <property type="match status" value="1"/>
</dbReference>
<dbReference type="Pfam" id="PF00763">
    <property type="entry name" value="THF_DHG_CYH"/>
    <property type="match status" value="1"/>
</dbReference>
<dbReference type="Pfam" id="PF02882">
    <property type="entry name" value="THF_DHG_CYH_C"/>
    <property type="match status" value="1"/>
</dbReference>
<dbReference type="PRINTS" id="PR00085">
    <property type="entry name" value="THFDHDRGNASE"/>
</dbReference>
<dbReference type="SUPFAM" id="SSF53223">
    <property type="entry name" value="Aminoacid dehydrogenase-like, N-terminal domain"/>
    <property type="match status" value="1"/>
</dbReference>
<dbReference type="SUPFAM" id="SSF51735">
    <property type="entry name" value="NAD(P)-binding Rossmann-fold domains"/>
    <property type="match status" value="1"/>
</dbReference>
<dbReference type="PROSITE" id="PS00767">
    <property type="entry name" value="THF_DHG_CYH_2"/>
    <property type="match status" value="1"/>
</dbReference>
<proteinExistence type="inferred from homology"/>
<accession>Q823G2</accession>
<name>FOLD_CHLCV</name>
<keyword id="KW-0028">Amino-acid biosynthesis</keyword>
<keyword id="KW-0368">Histidine biosynthesis</keyword>
<keyword id="KW-0378">Hydrolase</keyword>
<keyword id="KW-0486">Methionine biosynthesis</keyword>
<keyword id="KW-0511">Multifunctional enzyme</keyword>
<keyword id="KW-0521">NADP</keyword>
<keyword id="KW-0554">One-carbon metabolism</keyword>
<keyword id="KW-0560">Oxidoreductase</keyword>
<keyword id="KW-0658">Purine biosynthesis</keyword>
<organism>
    <name type="scientific">Chlamydia caviae (strain ATCC VR-813 / DSM 19441 / 03DC25 / GPIC)</name>
    <name type="common">Chlamydophila caviae</name>
    <dbReference type="NCBI Taxonomy" id="227941"/>
    <lineage>
        <taxon>Bacteria</taxon>
        <taxon>Pseudomonadati</taxon>
        <taxon>Chlamydiota</taxon>
        <taxon>Chlamydiia</taxon>
        <taxon>Chlamydiales</taxon>
        <taxon>Chlamydiaceae</taxon>
        <taxon>Chlamydia/Chlamydophila group</taxon>
        <taxon>Chlamydia</taxon>
    </lineage>
</organism>
<comment type="function">
    <text evidence="1">Catalyzes the oxidation of 5,10-methylenetetrahydrofolate to 5,10-methenyltetrahydrofolate and then the hydrolysis of 5,10-methenyltetrahydrofolate to 10-formyltetrahydrofolate.</text>
</comment>
<comment type="catalytic activity">
    <reaction evidence="1">
        <text>(6R)-5,10-methylene-5,6,7,8-tetrahydrofolate + NADP(+) = (6R)-5,10-methenyltetrahydrofolate + NADPH</text>
        <dbReference type="Rhea" id="RHEA:22812"/>
        <dbReference type="ChEBI" id="CHEBI:15636"/>
        <dbReference type="ChEBI" id="CHEBI:57455"/>
        <dbReference type="ChEBI" id="CHEBI:57783"/>
        <dbReference type="ChEBI" id="CHEBI:58349"/>
        <dbReference type="EC" id="1.5.1.5"/>
    </reaction>
</comment>
<comment type="catalytic activity">
    <reaction evidence="1">
        <text>(6R)-5,10-methenyltetrahydrofolate + H2O = (6R)-10-formyltetrahydrofolate + H(+)</text>
        <dbReference type="Rhea" id="RHEA:23700"/>
        <dbReference type="ChEBI" id="CHEBI:15377"/>
        <dbReference type="ChEBI" id="CHEBI:15378"/>
        <dbReference type="ChEBI" id="CHEBI:57455"/>
        <dbReference type="ChEBI" id="CHEBI:195366"/>
        <dbReference type="EC" id="3.5.4.9"/>
    </reaction>
</comment>
<comment type="pathway">
    <text evidence="1">One-carbon metabolism; tetrahydrofolate interconversion.</text>
</comment>
<comment type="subunit">
    <text evidence="1">Homodimer.</text>
</comment>
<comment type="similarity">
    <text evidence="1">Belongs to the tetrahydrofolate dehydrogenase/cyclohydrolase family.</text>
</comment>
<reference key="1">
    <citation type="journal article" date="2003" name="Nucleic Acids Res.">
        <title>Genome sequence of Chlamydophila caviae (Chlamydia psittaci GPIC): examining the role of niche-specific genes in the evolution of the Chlamydiaceae.</title>
        <authorList>
            <person name="Read T.D."/>
            <person name="Myers G.S.A."/>
            <person name="Brunham R.C."/>
            <person name="Nelson W.C."/>
            <person name="Paulsen I.T."/>
            <person name="Heidelberg J.F."/>
            <person name="Holtzapple E.K."/>
            <person name="Khouri H.M."/>
            <person name="Federova N.B."/>
            <person name="Carty H.A."/>
            <person name="Umayam L.A."/>
            <person name="Haft D.H."/>
            <person name="Peterson J.D."/>
            <person name="Beanan M.J."/>
            <person name="White O."/>
            <person name="Salzberg S.L."/>
            <person name="Hsia R.-C."/>
            <person name="McClarty G."/>
            <person name="Rank R.G."/>
            <person name="Bavoil P.M."/>
            <person name="Fraser C.M."/>
        </authorList>
    </citation>
    <scope>NUCLEOTIDE SEQUENCE [LARGE SCALE GENOMIC DNA]</scope>
    <source>
        <strain>ATCC VR-813 / DSM 19441 / 03DC25 / GPIC</strain>
    </source>
</reference>
<protein>
    <recommendedName>
        <fullName evidence="1">Bifunctional protein FolD</fullName>
    </recommendedName>
    <domain>
        <recommendedName>
            <fullName evidence="1">Methylenetetrahydrofolate dehydrogenase</fullName>
            <ecNumber evidence="1">1.5.1.5</ecNumber>
        </recommendedName>
    </domain>
    <domain>
        <recommendedName>
            <fullName evidence="1">Methenyltetrahydrofolate cyclohydrolase</fullName>
            <ecNumber evidence="1">3.5.4.9</ecNumber>
        </recommendedName>
    </domain>
</protein>
<gene>
    <name evidence="1" type="primary">folD</name>
    <name type="ordered locus">CCA_00448</name>
</gene>
<feature type="chain" id="PRO_0000268310" description="Bifunctional protein FolD">
    <location>
        <begin position="1"/>
        <end position="287"/>
    </location>
</feature>
<feature type="binding site" evidence="1">
    <location>
        <begin position="160"/>
        <end position="162"/>
    </location>
    <ligand>
        <name>NADP(+)</name>
        <dbReference type="ChEBI" id="CHEBI:58349"/>
    </ligand>
</feature>
<feature type="binding site" evidence="1">
    <location>
        <position position="189"/>
    </location>
    <ligand>
        <name>NADP(+)</name>
        <dbReference type="ChEBI" id="CHEBI:58349"/>
    </ligand>
</feature>
<feature type="binding site" evidence="1">
    <location>
        <position position="230"/>
    </location>
    <ligand>
        <name>NADP(+)</name>
        <dbReference type="ChEBI" id="CHEBI:58349"/>
    </ligand>
</feature>